<sequence length="249" mass="26071">MRRKIIAGNWKMNGDQDLVRRVAERAADSAGDAELAVCPPYPLLAAAASQLPFGVALGAQDVSEYDSGAYTGEVSASMLLEAGCRYVIVGHSERRTLYGEDNGRVAGKFVAARNAGLTPILCVGETLAERDAERTESVVGEQLDAVMDAVGGATFQGAVIAYEPVWAIGTGRTATPEQAQAVHAFIRQRVQERDAGEIADQLPILYGGSMKADNAAELLAQPDIDGGLIGGASLDPDSFLSIYNAAAEG</sequence>
<evidence type="ECO:0000255" key="1">
    <source>
        <dbReference type="HAMAP-Rule" id="MF_00147"/>
    </source>
</evidence>
<name>TPIS_HALHL</name>
<feature type="chain" id="PRO_0000307478" description="Triosephosphate isomerase">
    <location>
        <begin position="1"/>
        <end position="249"/>
    </location>
</feature>
<feature type="active site" description="Electrophile" evidence="1">
    <location>
        <position position="91"/>
    </location>
</feature>
<feature type="active site" description="Proton acceptor" evidence="1">
    <location>
        <position position="163"/>
    </location>
</feature>
<feature type="binding site" evidence="1">
    <location>
        <begin position="9"/>
        <end position="11"/>
    </location>
    <ligand>
        <name>substrate</name>
    </ligand>
</feature>
<feature type="binding site" evidence="1">
    <location>
        <position position="169"/>
    </location>
    <ligand>
        <name>substrate</name>
    </ligand>
</feature>
<feature type="binding site" evidence="1">
    <location>
        <position position="209"/>
    </location>
    <ligand>
        <name>substrate</name>
    </ligand>
</feature>
<feature type="binding site" evidence="1">
    <location>
        <begin position="230"/>
        <end position="231"/>
    </location>
    <ligand>
        <name>substrate</name>
    </ligand>
</feature>
<comment type="function">
    <text evidence="1">Involved in the gluconeogenesis. Catalyzes stereospecifically the conversion of dihydroxyacetone phosphate (DHAP) to D-glyceraldehyde-3-phosphate (G3P).</text>
</comment>
<comment type="catalytic activity">
    <reaction evidence="1">
        <text>D-glyceraldehyde 3-phosphate = dihydroxyacetone phosphate</text>
        <dbReference type="Rhea" id="RHEA:18585"/>
        <dbReference type="ChEBI" id="CHEBI:57642"/>
        <dbReference type="ChEBI" id="CHEBI:59776"/>
        <dbReference type="EC" id="5.3.1.1"/>
    </reaction>
</comment>
<comment type="pathway">
    <text evidence="1">Carbohydrate biosynthesis; gluconeogenesis.</text>
</comment>
<comment type="pathway">
    <text evidence="1">Carbohydrate degradation; glycolysis; D-glyceraldehyde 3-phosphate from glycerone phosphate: step 1/1.</text>
</comment>
<comment type="subunit">
    <text evidence="1">Homodimer.</text>
</comment>
<comment type="subcellular location">
    <subcellularLocation>
        <location evidence="1">Cytoplasm</location>
    </subcellularLocation>
</comment>
<comment type="similarity">
    <text evidence="1">Belongs to the triosephosphate isomerase family.</text>
</comment>
<protein>
    <recommendedName>
        <fullName evidence="1">Triosephosphate isomerase</fullName>
        <shortName evidence="1">TIM</shortName>
        <shortName evidence="1">TPI</shortName>
        <ecNumber evidence="1">5.3.1.1</ecNumber>
    </recommendedName>
    <alternativeName>
        <fullName evidence="1">Triose-phosphate isomerase</fullName>
    </alternativeName>
</protein>
<organism>
    <name type="scientific">Halorhodospira halophila (strain DSM 244 / SL1)</name>
    <name type="common">Ectothiorhodospira halophila (strain DSM 244 / SL1)</name>
    <dbReference type="NCBI Taxonomy" id="349124"/>
    <lineage>
        <taxon>Bacteria</taxon>
        <taxon>Pseudomonadati</taxon>
        <taxon>Pseudomonadota</taxon>
        <taxon>Gammaproteobacteria</taxon>
        <taxon>Chromatiales</taxon>
        <taxon>Ectothiorhodospiraceae</taxon>
        <taxon>Halorhodospira</taxon>
    </lineage>
</organism>
<gene>
    <name evidence="1" type="primary">tpiA</name>
    <name type="ordered locus">Hhal_1767</name>
</gene>
<dbReference type="EC" id="5.3.1.1" evidence="1"/>
<dbReference type="EMBL" id="CP000544">
    <property type="protein sequence ID" value="ABM62531.1"/>
    <property type="molecule type" value="Genomic_DNA"/>
</dbReference>
<dbReference type="RefSeq" id="WP_011814553.1">
    <property type="nucleotide sequence ID" value="NC_008789.1"/>
</dbReference>
<dbReference type="SMR" id="A1WXW9"/>
<dbReference type="STRING" id="349124.Hhal_1767"/>
<dbReference type="KEGG" id="hha:Hhal_1767"/>
<dbReference type="eggNOG" id="COG0149">
    <property type="taxonomic scope" value="Bacteria"/>
</dbReference>
<dbReference type="HOGENOM" id="CLU_024251_2_3_6"/>
<dbReference type="OrthoDB" id="9809429at2"/>
<dbReference type="UniPathway" id="UPA00109">
    <property type="reaction ID" value="UER00189"/>
</dbReference>
<dbReference type="UniPathway" id="UPA00138"/>
<dbReference type="Proteomes" id="UP000000647">
    <property type="component" value="Chromosome"/>
</dbReference>
<dbReference type="GO" id="GO:0005829">
    <property type="term" value="C:cytosol"/>
    <property type="evidence" value="ECO:0007669"/>
    <property type="project" value="TreeGrafter"/>
</dbReference>
<dbReference type="GO" id="GO:0004807">
    <property type="term" value="F:triose-phosphate isomerase activity"/>
    <property type="evidence" value="ECO:0007669"/>
    <property type="project" value="UniProtKB-UniRule"/>
</dbReference>
<dbReference type="GO" id="GO:0006094">
    <property type="term" value="P:gluconeogenesis"/>
    <property type="evidence" value="ECO:0007669"/>
    <property type="project" value="UniProtKB-UniRule"/>
</dbReference>
<dbReference type="GO" id="GO:0046166">
    <property type="term" value="P:glyceraldehyde-3-phosphate biosynthetic process"/>
    <property type="evidence" value="ECO:0007669"/>
    <property type="project" value="TreeGrafter"/>
</dbReference>
<dbReference type="GO" id="GO:0019563">
    <property type="term" value="P:glycerol catabolic process"/>
    <property type="evidence" value="ECO:0007669"/>
    <property type="project" value="TreeGrafter"/>
</dbReference>
<dbReference type="GO" id="GO:0006096">
    <property type="term" value="P:glycolytic process"/>
    <property type="evidence" value="ECO:0007669"/>
    <property type="project" value="UniProtKB-UniRule"/>
</dbReference>
<dbReference type="CDD" id="cd00311">
    <property type="entry name" value="TIM"/>
    <property type="match status" value="1"/>
</dbReference>
<dbReference type="FunFam" id="3.20.20.70:FF:000020">
    <property type="entry name" value="Triosephosphate isomerase"/>
    <property type="match status" value="1"/>
</dbReference>
<dbReference type="Gene3D" id="3.20.20.70">
    <property type="entry name" value="Aldolase class I"/>
    <property type="match status" value="1"/>
</dbReference>
<dbReference type="HAMAP" id="MF_00147_B">
    <property type="entry name" value="TIM_B"/>
    <property type="match status" value="1"/>
</dbReference>
<dbReference type="InterPro" id="IPR013785">
    <property type="entry name" value="Aldolase_TIM"/>
</dbReference>
<dbReference type="InterPro" id="IPR035990">
    <property type="entry name" value="TIM_sf"/>
</dbReference>
<dbReference type="InterPro" id="IPR022896">
    <property type="entry name" value="TrioseP_Isoase_bac/euk"/>
</dbReference>
<dbReference type="InterPro" id="IPR000652">
    <property type="entry name" value="Triosephosphate_isomerase"/>
</dbReference>
<dbReference type="InterPro" id="IPR020861">
    <property type="entry name" value="Triosephosphate_isomerase_AS"/>
</dbReference>
<dbReference type="NCBIfam" id="TIGR00419">
    <property type="entry name" value="tim"/>
    <property type="match status" value="1"/>
</dbReference>
<dbReference type="PANTHER" id="PTHR21139">
    <property type="entry name" value="TRIOSEPHOSPHATE ISOMERASE"/>
    <property type="match status" value="1"/>
</dbReference>
<dbReference type="PANTHER" id="PTHR21139:SF42">
    <property type="entry name" value="TRIOSEPHOSPHATE ISOMERASE"/>
    <property type="match status" value="1"/>
</dbReference>
<dbReference type="Pfam" id="PF00121">
    <property type="entry name" value="TIM"/>
    <property type="match status" value="1"/>
</dbReference>
<dbReference type="SUPFAM" id="SSF51351">
    <property type="entry name" value="Triosephosphate isomerase (TIM)"/>
    <property type="match status" value="1"/>
</dbReference>
<dbReference type="PROSITE" id="PS00171">
    <property type="entry name" value="TIM_1"/>
    <property type="match status" value="1"/>
</dbReference>
<dbReference type="PROSITE" id="PS51440">
    <property type="entry name" value="TIM_2"/>
    <property type="match status" value="1"/>
</dbReference>
<keyword id="KW-0963">Cytoplasm</keyword>
<keyword id="KW-0312">Gluconeogenesis</keyword>
<keyword id="KW-0324">Glycolysis</keyword>
<keyword id="KW-0413">Isomerase</keyword>
<keyword id="KW-1185">Reference proteome</keyword>
<proteinExistence type="inferred from homology"/>
<accession>A1WXW9</accession>
<reference key="1">
    <citation type="submission" date="2006-12" db="EMBL/GenBank/DDBJ databases">
        <title>Complete sequence of Halorhodospira halophila SL1.</title>
        <authorList>
            <consortium name="US DOE Joint Genome Institute"/>
            <person name="Copeland A."/>
            <person name="Lucas S."/>
            <person name="Lapidus A."/>
            <person name="Barry K."/>
            <person name="Detter J.C."/>
            <person name="Glavina del Rio T."/>
            <person name="Hammon N."/>
            <person name="Israni S."/>
            <person name="Dalin E."/>
            <person name="Tice H."/>
            <person name="Pitluck S."/>
            <person name="Saunders E."/>
            <person name="Brettin T."/>
            <person name="Bruce D."/>
            <person name="Han C."/>
            <person name="Tapia R."/>
            <person name="Schmutz J."/>
            <person name="Larimer F."/>
            <person name="Land M."/>
            <person name="Hauser L."/>
            <person name="Kyrpides N."/>
            <person name="Mikhailova N."/>
            <person name="Hoff W."/>
            <person name="Richardson P."/>
        </authorList>
    </citation>
    <scope>NUCLEOTIDE SEQUENCE [LARGE SCALE GENOMIC DNA]</scope>
    <source>
        <strain>DSM 244 / SL1</strain>
    </source>
</reference>